<sequence length="170" mass="18909">MRKLIIEPLTKEAFAPFGDVIETDGSDHFMINNGSTMRFHRLADVQTAQPEDKAIISIFRAEALPMPLTIGMLERHPLGSQAFVPLLGNPFLIVVAPVGDVPESEATRAFVSNGRQGVNYHRGVWHHPVLTIEKRDDFLVVDRSGEGNNCDEHYFAESQLLVLDPHPLEG</sequence>
<reference key="1">
    <citation type="journal article" date="2005" name="Proc. Natl. Acad. Sci. U.S.A.">
        <title>Comparison of the complete genome sequences of Pseudomonas syringae pv. syringae B728a and pv. tomato DC3000.</title>
        <authorList>
            <person name="Feil H."/>
            <person name="Feil W.S."/>
            <person name="Chain P."/>
            <person name="Larimer F."/>
            <person name="Dibartolo G."/>
            <person name="Copeland A."/>
            <person name="Lykidis A."/>
            <person name="Trong S."/>
            <person name="Nolan M."/>
            <person name="Goltsman E."/>
            <person name="Thiel J."/>
            <person name="Malfatti S."/>
            <person name="Loper J.E."/>
            <person name="Lapidus A."/>
            <person name="Detter J.C."/>
            <person name="Land M."/>
            <person name="Richardson P.M."/>
            <person name="Kyrpides N.C."/>
            <person name="Ivanova N."/>
            <person name="Lindow S.E."/>
        </authorList>
    </citation>
    <scope>NUCLEOTIDE SEQUENCE [LARGE SCALE GENOMIC DNA]</scope>
    <source>
        <strain>B728a</strain>
    </source>
</reference>
<protein>
    <recommendedName>
        <fullName evidence="1">Ureidoglycolate lyase</fullName>
        <ecNumber evidence="1">4.3.2.3</ecNumber>
    </recommendedName>
    <alternativeName>
        <fullName evidence="1">Ureidoglycolatase</fullName>
    </alternativeName>
</protein>
<keyword id="KW-0456">Lyase</keyword>
<keyword id="KW-0659">Purine metabolism</keyword>
<dbReference type="EC" id="4.3.2.3" evidence="1"/>
<dbReference type="EMBL" id="CP000075">
    <property type="protein sequence ID" value="AAY36853.1"/>
    <property type="molecule type" value="Genomic_DNA"/>
</dbReference>
<dbReference type="RefSeq" id="WP_003415815.1">
    <property type="nucleotide sequence ID" value="NC_007005.1"/>
</dbReference>
<dbReference type="RefSeq" id="YP_234891.1">
    <property type="nucleotide sequence ID" value="NC_007005.1"/>
</dbReference>
<dbReference type="SMR" id="Q4ZVG9"/>
<dbReference type="STRING" id="205918.Psyr_1806"/>
<dbReference type="KEGG" id="psb:Psyr_1806"/>
<dbReference type="PATRIC" id="fig|205918.7.peg.1849"/>
<dbReference type="eggNOG" id="COG3194">
    <property type="taxonomic scope" value="Bacteria"/>
</dbReference>
<dbReference type="HOGENOM" id="CLU_070848_1_0_6"/>
<dbReference type="OrthoDB" id="9804602at2"/>
<dbReference type="UniPathway" id="UPA00395"/>
<dbReference type="Proteomes" id="UP000000426">
    <property type="component" value="Chromosome"/>
</dbReference>
<dbReference type="GO" id="GO:0004848">
    <property type="term" value="F:ureidoglycolate hydrolase activity"/>
    <property type="evidence" value="ECO:0007669"/>
    <property type="project" value="InterPro"/>
</dbReference>
<dbReference type="GO" id="GO:0050385">
    <property type="term" value="F:ureidoglycolate lyase activity"/>
    <property type="evidence" value="ECO:0007669"/>
    <property type="project" value="UniProtKB-UniRule"/>
</dbReference>
<dbReference type="GO" id="GO:0000256">
    <property type="term" value="P:allantoin catabolic process"/>
    <property type="evidence" value="ECO:0007669"/>
    <property type="project" value="UniProtKB-UniRule"/>
</dbReference>
<dbReference type="GO" id="GO:0006145">
    <property type="term" value="P:purine nucleobase catabolic process"/>
    <property type="evidence" value="ECO:0007669"/>
    <property type="project" value="UniProtKB-UniRule"/>
</dbReference>
<dbReference type="CDD" id="cd20298">
    <property type="entry name" value="cupin_UAH"/>
    <property type="match status" value="1"/>
</dbReference>
<dbReference type="Gene3D" id="2.60.120.480">
    <property type="entry name" value="Ureidoglycolate hydrolase"/>
    <property type="match status" value="1"/>
</dbReference>
<dbReference type="HAMAP" id="MF_00616">
    <property type="entry name" value="Ureidogly_lyase"/>
    <property type="match status" value="1"/>
</dbReference>
<dbReference type="InterPro" id="IPR011051">
    <property type="entry name" value="RmlC_Cupin_sf"/>
</dbReference>
<dbReference type="InterPro" id="IPR047233">
    <property type="entry name" value="UAH_cupin"/>
</dbReference>
<dbReference type="InterPro" id="IPR007247">
    <property type="entry name" value="Ureidogly_lyase"/>
</dbReference>
<dbReference type="InterPro" id="IPR023525">
    <property type="entry name" value="Ureidogly_lyase_bac"/>
</dbReference>
<dbReference type="InterPro" id="IPR024060">
    <property type="entry name" value="Ureidoglycolate_lyase_dom_sf"/>
</dbReference>
<dbReference type="NCBIfam" id="NF002949">
    <property type="entry name" value="PRK03606.1-2"/>
    <property type="match status" value="1"/>
</dbReference>
<dbReference type="NCBIfam" id="NF009932">
    <property type="entry name" value="PRK13395.1"/>
    <property type="match status" value="1"/>
</dbReference>
<dbReference type="PANTHER" id="PTHR21221">
    <property type="entry name" value="UREIDOGLYCOLATE HYDROLASE"/>
    <property type="match status" value="1"/>
</dbReference>
<dbReference type="PANTHER" id="PTHR21221:SF1">
    <property type="entry name" value="UREIDOGLYCOLATE LYASE"/>
    <property type="match status" value="1"/>
</dbReference>
<dbReference type="Pfam" id="PF04115">
    <property type="entry name" value="Ureidogly_lyase"/>
    <property type="match status" value="1"/>
</dbReference>
<dbReference type="PIRSF" id="PIRSF017306">
    <property type="entry name" value="Ureidogly_hydro"/>
    <property type="match status" value="1"/>
</dbReference>
<dbReference type="SUPFAM" id="SSF51182">
    <property type="entry name" value="RmlC-like cupins"/>
    <property type="match status" value="1"/>
</dbReference>
<gene>
    <name evidence="1" type="primary">allA</name>
    <name type="ordered locus">Psyr_1806</name>
</gene>
<feature type="chain" id="PRO_1000061365" description="Ureidoglycolate lyase">
    <location>
        <begin position="1"/>
        <end position="170"/>
    </location>
</feature>
<proteinExistence type="inferred from homology"/>
<accession>Q4ZVG9</accession>
<organism>
    <name type="scientific">Pseudomonas syringae pv. syringae (strain B728a)</name>
    <dbReference type="NCBI Taxonomy" id="205918"/>
    <lineage>
        <taxon>Bacteria</taxon>
        <taxon>Pseudomonadati</taxon>
        <taxon>Pseudomonadota</taxon>
        <taxon>Gammaproteobacteria</taxon>
        <taxon>Pseudomonadales</taxon>
        <taxon>Pseudomonadaceae</taxon>
        <taxon>Pseudomonas</taxon>
        <taxon>Pseudomonas syringae</taxon>
    </lineage>
</organism>
<comment type="function">
    <text evidence="1">Catalyzes the catabolism of the allantoin degradation intermediate (S)-ureidoglycolate, generating urea and glyoxylate. Involved in the utilization of allantoin as nitrogen source.</text>
</comment>
<comment type="catalytic activity">
    <reaction evidence="1">
        <text>(S)-ureidoglycolate = urea + glyoxylate</text>
        <dbReference type="Rhea" id="RHEA:11304"/>
        <dbReference type="ChEBI" id="CHEBI:16199"/>
        <dbReference type="ChEBI" id="CHEBI:36655"/>
        <dbReference type="ChEBI" id="CHEBI:57296"/>
        <dbReference type="EC" id="4.3.2.3"/>
    </reaction>
</comment>
<comment type="cofactor">
    <cofactor evidence="1">
        <name>Ni(2+)</name>
        <dbReference type="ChEBI" id="CHEBI:49786"/>
    </cofactor>
</comment>
<comment type="pathway">
    <text evidence="1">Nitrogen metabolism; (S)-allantoin degradation.</text>
</comment>
<comment type="subunit">
    <text evidence="1">Homodimer.</text>
</comment>
<comment type="similarity">
    <text evidence="1">Belongs to the ureidoglycolate lyase family.</text>
</comment>
<evidence type="ECO:0000255" key="1">
    <source>
        <dbReference type="HAMAP-Rule" id="MF_00616"/>
    </source>
</evidence>
<name>ALLA_PSEU2</name>